<dbReference type="EMBL" id="CP000117">
    <property type="protein sequence ID" value="ABA21354.1"/>
    <property type="molecule type" value="Genomic_DNA"/>
</dbReference>
<dbReference type="SMR" id="Q3MCD2"/>
<dbReference type="STRING" id="240292.Ava_1732"/>
<dbReference type="KEGG" id="ava:Ava_1732"/>
<dbReference type="eggNOG" id="COG0199">
    <property type="taxonomic scope" value="Bacteria"/>
</dbReference>
<dbReference type="HOGENOM" id="CLU_139869_0_1_3"/>
<dbReference type="Proteomes" id="UP000002533">
    <property type="component" value="Chromosome"/>
</dbReference>
<dbReference type="GO" id="GO:0005737">
    <property type="term" value="C:cytoplasm"/>
    <property type="evidence" value="ECO:0007669"/>
    <property type="project" value="UniProtKB-ARBA"/>
</dbReference>
<dbReference type="GO" id="GO:0015935">
    <property type="term" value="C:small ribosomal subunit"/>
    <property type="evidence" value="ECO:0007669"/>
    <property type="project" value="TreeGrafter"/>
</dbReference>
<dbReference type="GO" id="GO:0019843">
    <property type="term" value="F:rRNA binding"/>
    <property type="evidence" value="ECO:0007669"/>
    <property type="project" value="UniProtKB-UniRule"/>
</dbReference>
<dbReference type="GO" id="GO:0003735">
    <property type="term" value="F:structural constituent of ribosome"/>
    <property type="evidence" value="ECO:0007669"/>
    <property type="project" value="InterPro"/>
</dbReference>
<dbReference type="GO" id="GO:0006412">
    <property type="term" value="P:translation"/>
    <property type="evidence" value="ECO:0007669"/>
    <property type="project" value="UniProtKB-UniRule"/>
</dbReference>
<dbReference type="FunFam" id="1.10.287.1480:FF:000001">
    <property type="entry name" value="30S ribosomal protein S14"/>
    <property type="match status" value="1"/>
</dbReference>
<dbReference type="Gene3D" id="1.10.287.1480">
    <property type="match status" value="1"/>
</dbReference>
<dbReference type="HAMAP" id="MF_00537">
    <property type="entry name" value="Ribosomal_uS14_1"/>
    <property type="match status" value="1"/>
</dbReference>
<dbReference type="InterPro" id="IPR001209">
    <property type="entry name" value="Ribosomal_uS14"/>
</dbReference>
<dbReference type="InterPro" id="IPR023036">
    <property type="entry name" value="Ribosomal_uS14_bac/plastid"/>
</dbReference>
<dbReference type="InterPro" id="IPR018271">
    <property type="entry name" value="Ribosomal_uS14_CS"/>
</dbReference>
<dbReference type="NCBIfam" id="NF006477">
    <property type="entry name" value="PRK08881.1"/>
    <property type="match status" value="1"/>
</dbReference>
<dbReference type="PANTHER" id="PTHR19836">
    <property type="entry name" value="30S RIBOSOMAL PROTEIN S14"/>
    <property type="match status" value="1"/>
</dbReference>
<dbReference type="PANTHER" id="PTHR19836:SF19">
    <property type="entry name" value="SMALL RIBOSOMAL SUBUNIT PROTEIN US14M"/>
    <property type="match status" value="1"/>
</dbReference>
<dbReference type="Pfam" id="PF00253">
    <property type="entry name" value="Ribosomal_S14"/>
    <property type="match status" value="1"/>
</dbReference>
<dbReference type="SUPFAM" id="SSF57716">
    <property type="entry name" value="Glucocorticoid receptor-like (DNA-binding domain)"/>
    <property type="match status" value="1"/>
</dbReference>
<dbReference type="PROSITE" id="PS00527">
    <property type="entry name" value="RIBOSOMAL_S14"/>
    <property type="match status" value="1"/>
</dbReference>
<reference key="1">
    <citation type="journal article" date="2014" name="Stand. Genomic Sci.">
        <title>Complete genome sequence of Anabaena variabilis ATCC 29413.</title>
        <authorList>
            <person name="Thiel T."/>
            <person name="Pratte B.S."/>
            <person name="Zhong J."/>
            <person name="Goodwin L."/>
            <person name="Copeland A."/>
            <person name="Lucas S."/>
            <person name="Han C."/>
            <person name="Pitluck S."/>
            <person name="Land M.L."/>
            <person name="Kyrpides N.C."/>
            <person name="Woyke T."/>
        </authorList>
    </citation>
    <scope>NUCLEOTIDE SEQUENCE [LARGE SCALE GENOMIC DNA]</scope>
    <source>
        <strain>ATCC 29413 / PCC 7937</strain>
    </source>
</reference>
<feature type="chain" id="PRO_1000128295" description="Small ribosomal subunit protein uS14">
    <location>
        <begin position="1"/>
        <end position="100"/>
    </location>
</feature>
<name>RS14_TRIV2</name>
<evidence type="ECO:0000255" key="1">
    <source>
        <dbReference type="HAMAP-Rule" id="MF_00537"/>
    </source>
</evidence>
<evidence type="ECO:0000305" key="2"/>
<gene>
    <name evidence="1" type="primary">rpsN</name>
    <name evidence="1" type="synonym">rps14</name>
    <name type="ordered locus">Ava_1732</name>
</gene>
<proteinExistence type="inferred from homology"/>
<protein>
    <recommendedName>
        <fullName evidence="1">Small ribosomal subunit protein uS14</fullName>
    </recommendedName>
    <alternativeName>
        <fullName evidence="2">30S ribosomal protein S14</fullName>
    </alternativeName>
</protein>
<accession>Q3MCD2</accession>
<keyword id="KW-0687">Ribonucleoprotein</keyword>
<keyword id="KW-0689">Ribosomal protein</keyword>
<keyword id="KW-0694">RNA-binding</keyword>
<keyword id="KW-0699">rRNA-binding</keyword>
<comment type="function">
    <text evidence="1">Binds 16S rRNA, required for the assembly of 30S particles and may also be responsible for determining the conformation of the 16S rRNA at the A site.</text>
</comment>
<comment type="subunit">
    <text evidence="1">Part of the 30S ribosomal subunit. Contacts proteins S3 and S10.</text>
</comment>
<comment type="similarity">
    <text evidence="1">Belongs to the universal ribosomal protein uS14 family.</text>
</comment>
<organism>
    <name type="scientific">Trichormus variabilis (strain ATCC 29413 / PCC 7937)</name>
    <name type="common">Anabaena variabilis</name>
    <dbReference type="NCBI Taxonomy" id="240292"/>
    <lineage>
        <taxon>Bacteria</taxon>
        <taxon>Bacillati</taxon>
        <taxon>Cyanobacteriota</taxon>
        <taxon>Cyanophyceae</taxon>
        <taxon>Nostocales</taxon>
        <taxon>Nostocaceae</taxon>
        <taxon>Trichormus</taxon>
    </lineage>
</organism>
<sequence length="100" mass="11886">MAKKSMIEREKKRAKLVEKYSAKREALLEEFRTTESPLEKLEIHRQIQQLPRNSAPNRRRNRCWVTGRPRGVYRDFGLSRNVLREWAHEGLLPGVVKSSW</sequence>